<comment type="function">
    <text>General role in the development of germlings including formation of the infection structures.</text>
</comment>
<proteinExistence type="predicted"/>
<dbReference type="EMBL" id="M73979">
    <property type="protein sequence ID" value="AAA34218.1"/>
    <property type="molecule type" value="Genomic_DNA"/>
</dbReference>
<dbReference type="PIR" id="JQ1468">
    <property type="entry name" value="JQ1468"/>
</dbReference>
<gene>
    <name type="primary">INF56</name>
</gene>
<protein>
    <recommendedName>
        <fullName>Infection structure-specific protein 56</fullName>
    </recommendedName>
</protein>
<reference key="1">
    <citation type="journal article" date="1993" name="Curr. Genet.">
        <title>INF56 represents a family of differentiation-specific genes from Uromyces appendiculatus.</title>
        <authorList>
            <person name="Xuei X.-L."/>
            <person name="Bhairi S.M."/>
            <person name="Staples R.C."/>
            <person name="Yoder O.C."/>
        </authorList>
    </citation>
    <scope>NUCLEOTIDE SEQUENCE [GENOMIC DNA]</scope>
</reference>
<reference key="2">
    <citation type="journal article" date="1992" name="Gene">
        <title>Characterization of INF56, a gene expressed during infection structure development of Uromyces appendiculatus.</title>
        <authorList>
            <person name="Xuei X.-L."/>
            <person name="Bhairi S.M."/>
            <person name="Staples R.C."/>
            <person name="Yoder O.C."/>
        </authorList>
    </citation>
    <scope>NUCLEOTIDE SEQUENCE [GENOMIC DNA]</scope>
</reference>
<evidence type="ECO:0000256" key="1">
    <source>
        <dbReference type="SAM" id="MobiDB-lite"/>
    </source>
</evidence>
<accession>P36228</accession>
<name>INF56_UROAP</name>
<organism>
    <name type="scientific">Uromyces appendiculatus</name>
    <name type="common">Rust fungus</name>
    <dbReference type="NCBI Taxonomy" id="5264"/>
    <lineage>
        <taxon>Eukaryota</taxon>
        <taxon>Fungi</taxon>
        <taxon>Dikarya</taxon>
        <taxon>Basidiomycota</taxon>
        <taxon>Pucciniomycotina</taxon>
        <taxon>Pucciniomycetes</taxon>
        <taxon>Pucciniales</taxon>
        <taxon>Pucciniaceae</taxon>
        <taxon>Uromyces</taxon>
    </lineage>
</organism>
<feature type="chain" id="PRO_0000084207" description="Infection structure-specific protein 56">
    <location>
        <begin position="1"/>
        <end position="128"/>
    </location>
</feature>
<feature type="region of interest" description="Disordered" evidence="1">
    <location>
        <begin position="27"/>
        <end position="48"/>
    </location>
</feature>
<feature type="region of interest" description="Disordered" evidence="1">
    <location>
        <begin position="86"/>
        <end position="128"/>
    </location>
</feature>
<feature type="compositionally biased region" description="Polar residues" evidence="1">
    <location>
        <begin position="27"/>
        <end position="36"/>
    </location>
</feature>
<feature type="compositionally biased region" description="Polar residues" evidence="1">
    <location>
        <begin position="87"/>
        <end position="101"/>
    </location>
</feature>
<feature type="compositionally biased region" description="Basic and acidic residues" evidence="1">
    <location>
        <begin position="115"/>
        <end position="128"/>
    </location>
</feature>
<sequence>MHCFIIFSVINLALLQLALGASLPTSHATYPQSQPHATKRSFGPAVPSSVNGFGPFGSTYISANQRQSQQSDSNYSYNSGFGPYGGTSISASQHQRQDSQSNYEYYNNGGGLYSKDAKKELKDPSTSA</sequence>